<gene>
    <name evidence="1" type="primary">bchL</name>
</gene>
<evidence type="ECO:0000255" key="1">
    <source>
        <dbReference type="HAMAP-Rule" id="MF_00355"/>
    </source>
</evidence>
<organism>
    <name type="scientific">Rhodospirillum rubrum</name>
    <dbReference type="NCBI Taxonomy" id="1085"/>
    <lineage>
        <taxon>Bacteria</taxon>
        <taxon>Pseudomonadati</taxon>
        <taxon>Pseudomonadota</taxon>
        <taxon>Alphaproteobacteria</taxon>
        <taxon>Rhodospirillales</taxon>
        <taxon>Rhodospirillaceae</taxon>
        <taxon>Rhodospirillum</taxon>
    </lineage>
</organism>
<proteinExistence type="inferred from homology"/>
<dbReference type="EC" id="1.3.7.7" evidence="1"/>
<dbReference type="EMBL" id="AF202319">
    <property type="protein sequence ID" value="AAF37353.1"/>
    <property type="molecule type" value="Genomic_DNA"/>
</dbReference>
<dbReference type="SMR" id="Q9L8J5"/>
<dbReference type="UniPathway" id="UPA00671"/>
<dbReference type="GO" id="GO:0051539">
    <property type="term" value="F:4 iron, 4 sulfur cluster binding"/>
    <property type="evidence" value="ECO:0007669"/>
    <property type="project" value="UniProtKB-UniRule"/>
</dbReference>
<dbReference type="GO" id="GO:0005524">
    <property type="term" value="F:ATP binding"/>
    <property type="evidence" value="ECO:0007669"/>
    <property type="project" value="UniProtKB-UniRule"/>
</dbReference>
<dbReference type="GO" id="GO:0046872">
    <property type="term" value="F:metal ion binding"/>
    <property type="evidence" value="ECO:0007669"/>
    <property type="project" value="UniProtKB-KW"/>
</dbReference>
<dbReference type="GO" id="GO:0016730">
    <property type="term" value="F:oxidoreductase activity, acting on iron-sulfur proteins as donors"/>
    <property type="evidence" value="ECO:0007669"/>
    <property type="project" value="InterPro"/>
</dbReference>
<dbReference type="GO" id="GO:0016636">
    <property type="term" value="F:oxidoreductase activity, acting on the CH-CH group of donors, iron-sulfur protein as acceptor"/>
    <property type="evidence" value="ECO:0007669"/>
    <property type="project" value="UniProtKB-UniRule"/>
</dbReference>
<dbReference type="GO" id="GO:0036070">
    <property type="term" value="P:light-independent bacteriochlorophyll biosynthetic process"/>
    <property type="evidence" value="ECO:0007669"/>
    <property type="project" value="UniProtKB-UniRule"/>
</dbReference>
<dbReference type="GO" id="GO:0019685">
    <property type="term" value="P:photosynthesis, dark reaction"/>
    <property type="evidence" value="ECO:0007669"/>
    <property type="project" value="InterPro"/>
</dbReference>
<dbReference type="CDD" id="cd02032">
    <property type="entry name" value="Bchl-like"/>
    <property type="match status" value="1"/>
</dbReference>
<dbReference type="Gene3D" id="3.40.50.300">
    <property type="entry name" value="P-loop containing nucleotide triphosphate hydrolases"/>
    <property type="match status" value="1"/>
</dbReference>
<dbReference type="HAMAP" id="MF_00355">
    <property type="entry name" value="ChlL_BchL"/>
    <property type="match status" value="1"/>
</dbReference>
<dbReference type="InterPro" id="IPR030655">
    <property type="entry name" value="NifH/chlL_CS"/>
</dbReference>
<dbReference type="InterPro" id="IPR000392">
    <property type="entry name" value="NifH/frxC"/>
</dbReference>
<dbReference type="InterPro" id="IPR027417">
    <property type="entry name" value="P-loop_NTPase"/>
</dbReference>
<dbReference type="InterPro" id="IPR005971">
    <property type="entry name" value="Protochlorophyllide_ATP-bd"/>
</dbReference>
<dbReference type="NCBIfam" id="TIGR01281">
    <property type="entry name" value="DPOR_bchL"/>
    <property type="match status" value="1"/>
</dbReference>
<dbReference type="PANTHER" id="PTHR42864">
    <property type="entry name" value="LIGHT-INDEPENDENT PROTOCHLOROPHYLLIDE REDUCTASE IRON-SULFUR ATP-BINDING PROTEIN"/>
    <property type="match status" value="1"/>
</dbReference>
<dbReference type="PANTHER" id="PTHR42864:SF2">
    <property type="entry name" value="LIGHT-INDEPENDENT PROTOCHLOROPHYLLIDE REDUCTASE IRON-SULFUR ATP-BINDING PROTEIN"/>
    <property type="match status" value="1"/>
</dbReference>
<dbReference type="Pfam" id="PF00142">
    <property type="entry name" value="Fer4_NifH"/>
    <property type="match status" value="1"/>
</dbReference>
<dbReference type="PIRSF" id="PIRSF000363">
    <property type="entry name" value="Nitrogenase_iron"/>
    <property type="match status" value="1"/>
</dbReference>
<dbReference type="PRINTS" id="PR00091">
    <property type="entry name" value="NITROGNASEII"/>
</dbReference>
<dbReference type="SUPFAM" id="SSF52540">
    <property type="entry name" value="P-loop containing nucleoside triphosphate hydrolases"/>
    <property type="match status" value="1"/>
</dbReference>
<dbReference type="PROSITE" id="PS00746">
    <property type="entry name" value="NIFH_FRXC_1"/>
    <property type="match status" value="1"/>
</dbReference>
<dbReference type="PROSITE" id="PS00692">
    <property type="entry name" value="NIFH_FRXC_2"/>
    <property type="match status" value="1"/>
</dbReference>
<dbReference type="PROSITE" id="PS51026">
    <property type="entry name" value="NIFH_FRXC_3"/>
    <property type="match status" value="1"/>
</dbReference>
<keyword id="KW-0004">4Fe-4S</keyword>
<keyword id="KW-0067">ATP-binding</keyword>
<keyword id="KW-0077">Bacteriochlorophyll biosynthesis</keyword>
<keyword id="KW-0149">Chlorophyll biosynthesis</keyword>
<keyword id="KW-0408">Iron</keyword>
<keyword id="KW-0411">Iron-sulfur</keyword>
<keyword id="KW-0460">Magnesium</keyword>
<keyword id="KW-0479">Metal-binding</keyword>
<keyword id="KW-0547">Nucleotide-binding</keyword>
<keyword id="KW-0560">Oxidoreductase</keyword>
<keyword id="KW-0602">Photosynthesis</keyword>
<accession>Q9L8J5</accession>
<protein>
    <recommendedName>
        <fullName evidence="1">Light-independent protochlorophyllide reductase iron-sulfur ATP-binding protein</fullName>
        <shortName evidence="1">DPOR subunit L</shortName>
        <shortName evidence="1">LI-POR subunit L</shortName>
        <ecNumber evidence="1">1.3.7.7</ecNumber>
    </recommendedName>
</protein>
<feature type="chain" id="PRO_0000139581" description="Light-independent protochlorophyllide reductase iron-sulfur ATP-binding protein">
    <location>
        <begin position="1"/>
        <end position="290"/>
    </location>
</feature>
<feature type="binding site" evidence="1">
    <location>
        <begin position="34"/>
        <end position="39"/>
    </location>
    <ligand>
        <name>ATP</name>
        <dbReference type="ChEBI" id="CHEBI:30616"/>
    </ligand>
</feature>
<feature type="binding site" evidence="1">
    <location>
        <position position="38"/>
    </location>
    <ligand>
        <name>Mg(2+)</name>
        <dbReference type="ChEBI" id="CHEBI:18420"/>
    </ligand>
</feature>
<feature type="binding site" evidence="1">
    <location>
        <position position="63"/>
    </location>
    <ligand>
        <name>ATP</name>
        <dbReference type="ChEBI" id="CHEBI:30616"/>
    </ligand>
</feature>
<feature type="binding site" evidence="1">
    <location>
        <position position="119"/>
    </location>
    <ligand>
        <name>[4Fe-4S] cluster</name>
        <dbReference type="ChEBI" id="CHEBI:49883"/>
        <note>ligand shared between dimeric partners</note>
    </ligand>
</feature>
<feature type="binding site" evidence="1">
    <location>
        <position position="153"/>
    </location>
    <ligand>
        <name>[4Fe-4S] cluster</name>
        <dbReference type="ChEBI" id="CHEBI:49883"/>
        <note>ligand shared between dimeric partners</note>
    </ligand>
</feature>
<feature type="binding site" evidence="1">
    <location>
        <begin position="204"/>
        <end position="205"/>
    </location>
    <ligand>
        <name>ATP</name>
        <dbReference type="ChEBI" id="CHEBI:30616"/>
    </ligand>
</feature>
<feature type="binding site" evidence="1">
    <location>
        <begin position="228"/>
        <end position="230"/>
    </location>
    <ligand>
        <name>ATP</name>
        <dbReference type="ChEBI" id="CHEBI:30616"/>
    </ligand>
</feature>
<name>BCHL_RHORU</name>
<sequence length="290" mass="31484">MRQPPDGEGSVQVEMDPALHIETAKVFAIYGKGGIGKSTTSSNLSAAFSKLGKRVVQIGCDPKHDSTFTLTKRLVPTVIDVLQAVHFHTEELRVEDFVYEGYNGVMCVEAGGPPAGTGCGGYVVGQTVKLLKEHHILEDADVVVFDVLGDVVCGGFATPLQHAERALVVAANDFDSIFAANRIAAAIQAKAKNYDVRLGGIIANRSVATDQIERFNARSGMRTLAHFPDLDVIRRSRLCKSTLFEMEPSPELAAVQQEYLRLAEALWEGVEPLTATPLIDREIFDLLGFD</sequence>
<reference key="1">
    <citation type="journal article" date="2000" name="J. Bacteriol.">
        <title>Role of the H protein in assembly of the photochemical reaction center and intracytoplasmic membrane in Rhodospirillum rubrum.</title>
        <authorList>
            <person name="Cheng Y.S."/>
            <person name="Brantner C.A."/>
            <person name="Tsapin A."/>
            <person name="Collins M.L.P."/>
        </authorList>
    </citation>
    <scope>NUCLEOTIDE SEQUENCE [GENOMIC DNA]</scope>
    <source>
        <strain>R5</strain>
    </source>
</reference>
<comment type="function">
    <text evidence="1">Component of the dark-operative protochlorophyllide reductase (DPOR) that uses Mg-ATP and reduced ferredoxin to reduce ring D of protochlorophyllide (Pchlide) to form chlorophyllide a (Chlide). This reaction is light-independent. The L component serves as a unique electron donor to the NB-component of the complex, and binds Mg-ATP.</text>
</comment>
<comment type="catalytic activity">
    <reaction evidence="1">
        <text>chlorophyllide a + oxidized 2[4Fe-4S]-[ferredoxin] + 2 ADP + 2 phosphate = protochlorophyllide a + reduced 2[4Fe-4S]-[ferredoxin] + 2 ATP + 2 H2O</text>
        <dbReference type="Rhea" id="RHEA:28202"/>
        <dbReference type="Rhea" id="RHEA-COMP:10002"/>
        <dbReference type="Rhea" id="RHEA-COMP:10004"/>
        <dbReference type="ChEBI" id="CHEBI:15377"/>
        <dbReference type="ChEBI" id="CHEBI:30616"/>
        <dbReference type="ChEBI" id="CHEBI:33722"/>
        <dbReference type="ChEBI" id="CHEBI:33723"/>
        <dbReference type="ChEBI" id="CHEBI:43474"/>
        <dbReference type="ChEBI" id="CHEBI:83348"/>
        <dbReference type="ChEBI" id="CHEBI:83350"/>
        <dbReference type="ChEBI" id="CHEBI:456216"/>
        <dbReference type="EC" id="1.3.7.7"/>
    </reaction>
</comment>
<comment type="cofactor">
    <cofactor evidence="1">
        <name>[4Fe-4S] cluster</name>
        <dbReference type="ChEBI" id="CHEBI:49883"/>
    </cofactor>
    <text evidence="1">Binds 1 [4Fe-4S] cluster per dimer.</text>
</comment>
<comment type="pathway">
    <text evidence="1">Porphyrin-containing compound metabolism; bacteriochlorophyll biosynthesis (light-independent).</text>
</comment>
<comment type="subunit">
    <text evidence="1">Homodimer. Protochlorophyllide reductase is composed of three subunits; BchL, BchN and BchB.</text>
</comment>
<comment type="similarity">
    <text evidence="1">Belongs to the NifH/BchL/ChlL family.</text>
</comment>